<reference key="1">
    <citation type="journal article" date="1990" name="EMBO J.">
        <title>Isolation of a gene encoding a novel chloroplast protein by T-DNA tagging in Arabidopsis thaliana.</title>
        <authorList>
            <person name="Koncz C."/>
            <person name="Mayerhofer R."/>
            <person name="Koncz-Kalman Z."/>
            <person name="Nawrath C."/>
            <person name="Reiss B."/>
            <person name="Redei G.P."/>
            <person name="Schell J."/>
        </authorList>
    </citation>
    <scope>NUCLEOTIDE SEQUENCE [GENOMIC DNA]</scope>
    <scope>DISRUPTION PHENOTYPE</scope>
    <source>
        <strain>cv. Columbia</strain>
    </source>
</reference>
<reference key="2">
    <citation type="submission" date="1995-09" db="EMBL/GenBank/DDBJ databases">
        <authorList>
            <person name="Putnoky P."/>
            <person name="Koncz C."/>
        </authorList>
    </citation>
    <scope>NUCLEOTIDE SEQUENCE [GENOMIC DNA]</scope>
    <source>
        <strain>cv. Dijon</strain>
        <tissue>Callus</tissue>
    </source>
</reference>
<reference key="3">
    <citation type="journal article" date="1999" name="Nature">
        <title>Sequence and analysis of chromosome 4 of the plant Arabidopsis thaliana.</title>
        <authorList>
            <person name="Mayer K.F.X."/>
            <person name="Schueller C."/>
            <person name="Wambutt R."/>
            <person name="Murphy G."/>
            <person name="Volckaert G."/>
            <person name="Pohl T."/>
            <person name="Duesterhoeft A."/>
            <person name="Stiekema W."/>
            <person name="Entian K.-D."/>
            <person name="Terryn N."/>
            <person name="Harris B."/>
            <person name="Ansorge W."/>
            <person name="Brandt P."/>
            <person name="Grivell L.A."/>
            <person name="Rieger M."/>
            <person name="Weichselgartner M."/>
            <person name="de Simone V."/>
            <person name="Obermaier B."/>
            <person name="Mache R."/>
            <person name="Mueller M."/>
            <person name="Kreis M."/>
            <person name="Delseny M."/>
            <person name="Puigdomenech P."/>
            <person name="Watson M."/>
            <person name="Schmidtheini T."/>
            <person name="Reichert B."/>
            <person name="Portetelle D."/>
            <person name="Perez-Alonso M."/>
            <person name="Boutry M."/>
            <person name="Bancroft I."/>
            <person name="Vos P."/>
            <person name="Hoheisel J."/>
            <person name="Zimmermann W."/>
            <person name="Wedler H."/>
            <person name="Ridley P."/>
            <person name="Langham S.-A."/>
            <person name="McCullagh B."/>
            <person name="Bilham L."/>
            <person name="Robben J."/>
            <person name="van der Schueren J."/>
            <person name="Grymonprez B."/>
            <person name="Chuang Y.-J."/>
            <person name="Vandenbussche F."/>
            <person name="Braeken M."/>
            <person name="Weltjens I."/>
            <person name="Voet M."/>
            <person name="Bastiaens I."/>
            <person name="Aert R."/>
            <person name="Defoor E."/>
            <person name="Weitzenegger T."/>
            <person name="Bothe G."/>
            <person name="Ramsperger U."/>
            <person name="Hilbert H."/>
            <person name="Braun M."/>
            <person name="Holzer E."/>
            <person name="Brandt A."/>
            <person name="Peters S."/>
            <person name="van Staveren M."/>
            <person name="Dirkse W."/>
            <person name="Mooijman P."/>
            <person name="Klein Lankhorst R."/>
            <person name="Rose M."/>
            <person name="Hauf J."/>
            <person name="Koetter P."/>
            <person name="Berneiser S."/>
            <person name="Hempel S."/>
            <person name="Feldpausch M."/>
            <person name="Lamberth S."/>
            <person name="Van den Daele H."/>
            <person name="De Keyser A."/>
            <person name="Buysshaert C."/>
            <person name="Gielen J."/>
            <person name="Villarroel R."/>
            <person name="De Clercq R."/>
            <person name="van Montagu M."/>
            <person name="Rogers J."/>
            <person name="Cronin A."/>
            <person name="Quail M.A."/>
            <person name="Bray-Allen S."/>
            <person name="Clark L."/>
            <person name="Doggett J."/>
            <person name="Hall S."/>
            <person name="Kay M."/>
            <person name="Lennard N."/>
            <person name="McLay K."/>
            <person name="Mayes R."/>
            <person name="Pettett A."/>
            <person name="Rajandream M.A."/>
            <person name="Lyne M."/>
            <person name="Benes V."/>
            <person name="Rechmann S."/>
            <person name="Borkova D."/>
            <person name="Bloecker H."/>
            <person name="Scharfe M."/>
            <person name="Grimm M."/>
            <person name="Loehnert T.-H."/>
            <person name="Dose S."/>
            <person name="de Haan M."/>
            <person name="Maarse A.C."/>
            <person name="Schaefer M."/>
            <person name="Mueller-Auer S."/>
            <person name="Gabel C."/>
            <person name="Fuchs M."/>
            <person name="Fartmann B."/>
            <person name="Granderath K."/>
            <person name="Dauner D."/>
            <person name="Herzl A."/>
            <person name="Neumann S."/>
            <person name="Argiriou A."/>
            <person name="Vitale D."/>
            <person name="Liguori R."/>
            <person name="Piravandi E."/>
            <person name="Massenet O."/>
            <person name="Quigley F."/>
            <person name="Clabauld G."/>
            <person name="Muendlein A."/>
            <person name="Felber R."/>
            <person name="Schnabl S."/>
            <person name="Hiller R."/>
            <person name="Schmidt W."/>
            <person name="Lecharny A."/>
            <person name="Aubourg S."/>
            <person name="Chefdor F."/>
            <person name="Cooke R."/>
            <person name="Berger C."/>
            <person name="Monfort A."/>
            <person name="Casacuberta E."/>
            <person name="Gibbons T."/>
            <person name="Weber N."/>
            <person name="Vandenbol M."/>
            <person name="Bargues M."/>
            <person name="Terol J."/>
            <person name="Torres A."/>
            <person name="Perez-Perez A."/>
            <person name="Purnelle B."/>
            <person name="Bent E."/>
            <person name="Johnson S."/>
            <person name="Tacon D."/>
            <person name="Jesse T."/>
            <person name="Heijnen L."/>
            <person name="Schwarz S."/>
            <person name="Scholler P."/>
            <person name="Heber S."/>
            <person name="Francs P."/>
            <person name="Bielke C."/>
            <person name="Frishman D."/>
            <person name="Haase D."/>
            <person name="Lemcke K."/>
            <person name="Mewes H.-W."/>
            <person name="Stocker S."/>
            <person name="Zaccaria P."/>
            <person name="Bevan M."/>
            <person name="Wilson R.K."/>
            <person name="de la Bastide M."/>
            <person name="Habermann K."/>
            <person name="Parnell L."/>
            <person name="Dedhia N."/>
            <person name="Gnoj L."/>
            <person name="Schutz K."/>
            <person name="Huang E."/>
            <person name="Spiegel L."/>
            <person name="Sekhon M."/>
            <person name="Murray J."/>
            <person name="Sheet P."/>
            <person name="Cordes M."/>
            <person name="Abu-Threideh J."/>
            <person name="Stoneking T."/>
            <person name="Kalicki J."/>
            <person name="Graves T."/>
            <person name="Harmon G."/>
            <person name="Edwards J."/>
            <person name="Latreille P."/>
            <person name="Courtney L."/>
            <person name="Cloud J."/>
            <person name="Abbott A."/>
            <person name="Scott K."/>
            <person name="Johnson D."/>
            <person name="Minx P."/>
            <person name="Bentley D."/>
            <person name="Fulton B."/>
            <person name="Miller N."/>
            <person name="Greco T."/>
            <person name="Kemp K."/>
            <person name="Kramer J."/>
            <person name="Fulton L."/>
            <person name="Mardis E."/>
            <person name="Dante M."/>
            <person name="Pepin K."/>
            <person name="Hillier L.W."/>
            <person name="Nelson J."/>
            <person name="Spieth J."/>
            <person name="Ryan E."/>
            <person name="Andrews S."/>
            <person name="Geisel C."/>
            <person name="Layman D."/>
            <person name="Du H."/>
            <person name="Ali J."/>
            <person name="Berghoff A."/>
            <person name="Jones K."/>
            <person name="Drone K."/>
            <person name="Cotton M."/>
            <person name="Joshu C."/>
            <person name="Antonoiu B."/>
            <person name="Zidanic M."/>
            <person name="Strong C."/>
            <person name="Sun H."/>
            <person name="Lamar B."/>
            <person name="Yordan C."/>
            <person name="Ma P."/>
            <person name="Zhong J."/>
            <person name="Preston R."/>
            <person name="Vil D."/>
            <person name="Shekher M."/>
            <person name="Matero A."/>
            <person name="Shah R."/>
            <person name="Swaby I.K."/>
            <person name="O'Shaughnessy A."/>
            <person name="Rodriguez M."/>
            <person name="Hoffman J."/>
            <person name="Till S."/>
            <person name="Granat S."/>
            <person name="Shohdy N."/>
            <person name="Hasegawa A."/>
            <person name="Hameed A."/>
            <person name="Lodhi M."/>
            <person name="Johnson A."/>
            <person name="Chen E."/>
            <person name="Marra M.A."/>
            <person name="Martienssen R."/>
            <person name="McCombie W.R."/>
        </authorList>
    </citation>
    <scope>NUCLEOTIDE SEQUENCE [LARGE SCALE GENOMIC DNA]</scope>
    <source>
        <strain>cv. Columbia</strain>
    </source>
</reference>
<reference key="4">
    <citation type="journal article" date="2017" name="Plant J.">
        <title>Araport11: a complete reannotation of the Arabidopsis thaliana reference genome.</title>
        <authorList>
            <person name="Cheng C.Y."/>
            <person name="Krishnakumar V."/>
            <person name="Chan A.P."/>
            <person name="Thibaud-Nissen F."/>
            <person name="Schobel S."/>
            <person name="Town C.D."/>
        </authorList>
    </citation>
    <scope>GENOME REANNOTATION</scope>
    <source>
        <strain>cv. Columbia</strain>
    </source>
</reference>
<reference key="5">
    <citation type="journal article" date="2003" name="Science">
        <title>Empirical analysis of transcriptional activity in the Arabidopsis genome.</title>
        <authorList>
            <person name="Yamada K."/>
            <person name="Lim J."/>
            <person name="Dale J.M."/>
            <person name="Chen H."/>
            <person name="Shinn P."/>
            <person name="Palm C.J."/>
            <person name="Southwick A.M."/>
            <person name="Wu H.C."/>
            <person name="Kim C.J."/>
            <person name="Nguyen M."/>
            <person name="Pham P.K."/>
            <person name="Cheuk R.F."/>
            <person name="Karlin-Newmann G."/>
            <person name="Liu S.X."/>
            <person name="Lam B."/>
            <person name="Sakano H."/>
            <person name="Wu T."/>
            <person name="Yu G."/>
            <person name="Miranda M."/>
            <person name="Quach H.L."/>
            <person name="Tripp M."/>
            <person name="Chang C.H."/>
            <person name="Lee J.M."/>
            <person name="Toriumi M.J."/>
            <person name="Chan M.M."/>
            <person name="Tang C.C."/>
            <person name="Onodera C.S."/>
            <person name="Deng J.M."/>
            <person name="Akiyama K."/>
            <person name="Ansari Y."/>
            <person name="Arakawa T."/>
            <person name="Banh J."/>
            <person name="Banno F."/>
            <person name="Bowser L."/>
            <person name="Brooks S.Y."/>
            <person name="Carninci P."/>
            <person name="Chao Q."/>
            <person name="Choy N."/>
            <person name="Enju A."/>
            <person name="Goldsmith A.D."/>
            <person name="Gurjal M."/>
            <person name="Hansen N.F."/>
            <person name="Hayashizaki Y."/>
            <person name="Johnson-Hopson C."/>
            <person name="Hsuan V.W."/>
            <person name="Iida K."/>
            <person name="Karnes M."/>
            <person name="Khan S."/>
            <person name="Koesema E."/>
            <person name="Ishida J."/>
            <person name="Jiang P.X."/>
            <person name="Jones T."/>
            <person name="Kawai J."/>
            <person name="Kamiya A."/>
            <person name="Meyers C."/>
            <person name="Nakajima M."/>
            <person name="Narusaka M."/>
            <person name="Seki M."/>
            <person name="Sakurai T."/>
            <person name="Satou M."/>
            <person name="Tamse R."/>
            <person name="Vaysberg M."/>
            <person name="Wallender E.K."/>
            <person name="Wong C."/>
            <person name="Yamamura Y."/>
            <person name="Yuan S."/>
            <person name="Shinozaki K."/>
            <person name="Davis R.W."/>
            <person name="Theologis A."/>
            <person name="Ecker J.R."/>
        </authorList>
    </citation>
    <scope>NUCLEOTIDE SEQUENCE [LARGE SCALE MRNA]</scope>
    <source>
        <strain>cv. Columbia</strain>
    </source>
</reference>
<reference key="6">
    <citation type="submission" date="2006-07" db="EMBL/GenBank/DDBJ databases">
        <title>Large-scale analysis of RIKEN Arabidopsis full-length (RAFL) cDNAs.</title>
        <authorList>
            <person name="Totoki Y."/>
            <person name="Seki M."/>
            <person name="Ishida J."/>
            <person name="Nakajima M."/>
            <person name="Enju A."/>
            <person name="Kamiya A."/>
            <person name="Narusaka M."/>
            <person name="Shin-i T."/>
            <person name="Nakagawa M."/>
            <person name="Sakamoto N."/>
            <person name="Oishi K."/>
            <person name="Kohara Y."/>
            <person name="Kobayashi M."/>
            <person name="Toyoda A."/>
            <person name="Sakaki Y."/>
            <person name="Sakurai T."/>
            <person name="Iida K."/>
            <person name="Akiyama K."/>
            <person name="Satou M."/>
            <person name="Toyoda T."/>
            <person name="Konagaya A."/>
            <person name="Carninci P."/>
            <person name="Kawai J."/>
            <person name="Hayashizaki Y."/>
            <person name="Shinozaki K."/>
        </authorList>
    </citation>
    <scope>NUCLEOTIDE SEQUENCE [LARGE SCALE MRNA]</scope>
    <source>
        <strain>cv. Columbia</strain>
    </source>
</reference>
<reference key="7">
    <citation type="journal article" date="2002" name="Plant Physiol.">
        <title>Chlorophyll biosynthesis. Expression of a second chl I gene of magnesium chelatase in Arabidopsis supports only limited chlorophyll synthesis.</title>
        <authorList>
            <person name="Rissler H.M."/>
            <person name="Collakova E."/>
            <person name="DellaPenna D."/>
            <person name="Whelan J."/>
            <person name="Pogson B.J."/>
        </authorList>
    </citation>
    <scope>FUNCTION</scope>
    <scope>CATALYTIC ACTIVITY</scope>
    <scope>DISRUPTION PHENOTYPE</scope>
</reference>
<reference key="8">
    <citation type="journal article" date="2005" name="Mol. Genet. Genomics">
        <title>An Arabidopsis mutant that is resistant to the protoporphyrinogen oxidase inhibitor acifluorfen shows regulatory changes in tetrapyrrole biosynthesis.</title>
        <authorList>
            <person name="Soldatova O."/>
            <person name="Apchelimov A."/>
            <person name="Radukina N."/>
            <person name="Ezhova T."/>
            <person name="Shestakov S."/>
            <person name="Ziemann V."/>
            <person name="Hedtke B."/>
            <person name="Grimm B."/>
        </authorList>
    </citation>
    <scope>FUNCTION</scope>
    <scope>DISRUPTION PHENOTYPE</scope>
    <scope>MUTAGENESIS OF ASP-240</scope>
    <source>
        <strain>cv. Dijon</strain>
    </source>
</reference>
<reference key="9">
    <citation type="journal article" date="2007" name="J. Biol. Chem.">
        <title>The CHLI1 subunit of Arabidopsis thaliana magnesium chelatase is a target protein of the chloroplast thioredoxin.</title>
        <authorList>
            <person name="Ikegami A."/>
            <person name="Yoshimura N."/>
            <person name="Motohashi K."/>
            <person name="Takahashi S."/>
            <person name="Romano P.G."/>
            <person name="Hisabori T."/>
            <person name="Takamiya K."/>
            <person name="Masuda T."/>
        </authorList>
    </citation>
    <scope>FUNCTION</scope>
    <scope>ACTIVITY REGULATION</scope>
    <scope>BIOPHYSICOCHEMICAL PROPERTIES</scope>
    <scope>DISULFIDE BOND</scope>
    <scope>MUTAGENESIS OF CYS-102; CYS-193; CYS-354 AND CYS-396</scope>
</reference>
<reference key="10">
    <citation type="journal article" date="2008" name="Photochem. Photobiol. Sci.">
        <title>Functional analysis of Arabidopsis thaliana isoforms of the Mg-chelatase CHLI subunit.</title>
        <authorList>
            <person name="Kobayashi K."/>
            <person name="Mochizuki N."/>
            <person name="Yoshimura N."/>
            <person name="Motohashi K."/>
            <person name="Hisabori T."/>
            <person name="Masuda T."/>
        </authorList>
    </citation>
    <scope>FUNCTION</scope>
</reference>
<reference key="11">
    <citation type="journal article" date="2008" name="Photochem. Photobiol. Sci.">
        <title>Light signalling pathways regulating the Mg-chelatase branchpoint of chlorophyll synthesis during de-etiolation in Arabidopsis thaliana.</title>
        <authorList>
            <person name="Stephenson P.G."/>
            <person name="Terry M.J."/>
        </authorList>
    </citation>
    <scope>INDUCTION BY LIGHT</scope>
</reference>
<reference key="12">
    <citation type="journal article" date="2009" name="Plant Physiol.">
        <title>Large-scale Arabidopsis phosphoproteome profiling reveals novel chloroplast kinase substrates and phosphorylation networks.</title>
        <authorList>
            <person name="Reiland S."/>
            <person name="Messerli G."/>
            <person name="Baerenfaller K."/>
            <person name="Gerrits B."/>
            <person name="Endler A."/>
            <person name="Grossmann J."/>
            <person name="Gruissem W."/>
            <person name="Baginsky S."/>
        </authorList>
    </citation>
    <scope>PHOSPHORYLATION [LARGE SCALE ANALYSIS] AT SER-355</scope>
    <scope>IDENTIFICATION BY MASS SPECTROMETRY [LARGE SCALE ANALYSIS]</scope>
</reference>
<reference key="13">
    <citation type="journal article" date="2012" name="Mol. Cell. Proteomics">
        <title>Comparative large-scale characterisation of plant vs. mammal proteins reveals similar and idiosyncratic N-alpha acetylation features.</title>
        <authorList>
            <person name="Bienvenut W.V."/>
            <person name="Sumpton D."/>
            <person name="Martinez A."/>
            <person name="Lilla S."/>
            <person name="Espagne C."/>
            <person name="Meinnel T."/>
            <person name="Giglione C."/>
        </authorList>
    </citation>
    <scope>ACETYLATION [LARGE SCALE ANALYSIS] AT VAL-61</scope>
    <scope>CLEAVAGE OF TRANSIT PEPTIDE [LARGE SCALE ANALYSIS] AFTER SER-60</scope>
    <scope>IDENTIFICATION BY MASS SPECTROMETRY [LARGE SCALE ANALYSIS]</scope>
</reference>
<reference key="14">
    <citation type="journal article" date="2012" name="Plant Mol. Biol.">
        <title>Roles of the different components of magnesium chelatase in abscisic acid signal transduction.</title>
        <authorList>
            <person name="Du S.Y."/>
            <person name="Zhang X.F."/>
            <person name="Lu Z."/>
            <person name="Xin Q."/>
            <person name="Wu Z."/>
            <person name="Jiang T."/>
            <person name="Lu Y."/>
            <person name="Wang X.F."/>
            <person name="Zhang D.P."/>
        </authorList>
    </citation>
    <scope>INTERACTION WITH CHLH AND CHLD</scope>
    <scope>FUNCTION</scope>
</reference>
<reference key="15">
    <citation type="journal article" date="2014" name="J. Plant Res.">
        <title>Mg-chelatase I subunit 1 and Mg-protoporphyrin IX methyltransferase affect the stomatal aperture in Arabidopsis thaliana.</title>
        <authorList>
            <person name="Tomiyama M."/>
            <person name="Inoue S."/>
            <person name="Tsuzuki T."/>
            <person name="Soda M."/>
            <person name="Morimoto S."/>
            <person name="Okigaki Y."/>
            <person name="Ohishi T."/>
            <person name="Mochizuki N."/>
            <person name="Takahashi K."/>
            <person name="Kinoshita T."/>
        </authorList>
    </citation>
    <scope>FUNCTION</scope>
    <scope>DISRUPTION PHENOTYPE</scope>
</reference>
<accession>P16127</accession>
<accession>Q0WUK7</accession>
<sequence>MASLLGTSSSAIWASPSLSSPSSKPSSSPICFRPGKLFGSKLNAGIQIRPKKNRSRYHVSVMNVATEINSTEQVVGKFDSKKSARPVYPFAAIVGQDEMKLCLLLNVIDPKIGGVMIMGDRGTGKSTTVRSLVDLLPEINVVAGDPYNSDPIDPEFMGVEVRERVEKGEQVPVIATKINMVDLPLGATEDRVCGTIDIEKALTEGVKAFEPGLLAKANRGILYVDEVNLLDDHLVDVLLDSAASGWNTVEREGISISHPARFILIGSGNPEEGELRPQLLDRFGMHAQVGTVRDADLRVKIVEERARFDSNPKDFRDTYKTEQDKLQDQISTARANLSSVQIDRELKVKISRVCSELNVDGLRGDIVTNRAAKALAALKGKDRVTPDDVATVIPNCLRHRLRKDPLESIDSGVLVSEKFAEIFS</sequence>
<proteinExistence type="evidence at protein level"/>
<organism>
    <name type="scientific">Arabidopsis thaliana</name>
    <name type="common">Mouse-ear cress</name>
    <dbReference type="NCBI Taxonomy" id="3702"/>
    <lineage>
        <taxon>Eukaryota</taxon>
        <taxon>Viridiplantae</taxon>
        <taxon>Streptophyta</taxon>
        <taxon>Embryophyta</taxon>
        <taxon>Tracheophyta</taxon>
        <taxon>Spermatophyta</taxon>
        <taxon>Magnoliopsida</taxon>
        <taxon>eudicotyledons</taxon>
        <taxon>Gunneridae</taxon>
        <taxon>Pentapetalae</taxon>
        <taxon>rosids</taxon>
        <taxon>malvids</taxon>
        <taxon>Brassicales</taxon>
        <taxon>Brassicaceae</taxon>
        <taxon>Camelineae</taxon>
        <taxon>Arabidopsis</taxon>
    </lineage>
</organism>
<keyword id="KW-0007">Acetylation</keyword>
<keyword id="KW-0067">ATP-binding</keyword>
<keyword id="KW-0149">Chlorophyll biosynthesis</keyword>
<keyword id="KW-0150">Chloroplast</keyword>
<keyword id="KW-1015">Disulfide bond</keyword>
<keyword id="KW-0436">Ligase</keyword>
<keyword id="KW-0547">Nucleotide-binding</keyword>
<keyword id="KW-0597">Phosphoprotein</keyword>
<keyword id="KW-0602">Photosynthesis</keyword>
<keyword id="KW-0934">Plastid</keyword>
<keyword id="KW-1185">Reference proteome</keyword>
<keyword id="KW-0809">Transit peptide</keyword>
<feature type="transit peptide" description="Chloroplast" evidence="1 14">
    <location>
        <begin position="1"/>
        <end position="60"/>
    </location>
</feature>
<feature type="chain" id="PRO_0000002801" description="Magnesium-chelatase subunit ChlI-1, chloroplastic">
    <location>
        <begin position="61"/>
        <end position="424"/>
    </location>
</feature>
<feature type="binding site" evidence="1">
    <location>
        <begin position="119"/>
        <end position="126"/>
    </location>
    <ligand>
        <name>ATP</name>
        <dbReference type="ChEBI" id="CHEBI:30616"/>
    </ligand>
</feature>
<feature type="modified residue" description="N-acetylvaline" evidence="14">
    <location>
        <position position="61"/>
    </location>
</feature>
<feature type="modified residue" description="Phosphoserine" evidence="13">
    <location>
        <position position="355"/>
    </location>
</feature>
<feature type="disulfide bond" evidence="12">
    <location>
        <begin position="102"/>
        <end position="193"/>
    </location>
</feature>
<feature type="disulfide bond" description="Inhibitory under oxidizing conditions" evidence="12">
    <location>
        <begin position="354"/>
        <end position="396"/>
    </location>
</feature>
<feature type="mutagenesis site" description="Reduces ATPase activity 2-fold." evidence="4">
    <original>C</original>
    <variation>S</variation>
    <location>
        <position position="102"/>
    </location>
</feature>
<feature type="mutagenesis site" description="Reduces ATPase activity 2-fold." evidence="4">
    <original>C</original>
    <variation>S</variation>
    <location>
        <position position="193"/>
    </location>
</feature>
<feature type="mutagenesis site" description="In aci5-3; white and inviable plants. Resistance to the herbicide acifluorfen when grown on sucrose-containing medium." evidence="3">
    <original>D</original>
    <variation>N</variation>
    <location>
        <position position="240"/>
    </location>
</feature>
<feature type="mutagenesis site" description="Reduces ATPase activity 5-fold." evidence="4">
    <original>C</original>
    <variation>S</variation>
    <location>
        <position position="354"/>
    </location>
</feature>
<feature type="mutagenesis site" description="Reduces ATPase activity 5-fold." evidence="4">
    <original>C</original>
    <variation>S</variation>
    <location>
        <position position="396"/>
    </location>
</feature>
<gene>
    <name type="primary">CHLI1</name>
    <name type="synonym">CH42</name>
    <name type="synonym">CS</name>
    <name type="ordered locus">At4g18480</name>
    <name type="ORF">F28J12.140</name>
</gene>
<dbReference type="EC" id="6.6.1.1" evidence="11"/>
<dbReference type="EMBL" id="X51799">
    <property type="protein sequence ID" value="CAB38561.1"/>
    <property type="molecule type" value="Genomic_DNA"/>
</dbReference>
<dbReference type="EMBL" id="X91411">
    <property type="protein sequence ID" value="CAA62754.1"/>
    <property type="molecule type" value="Genomic_DNA"/>
</dbReference>
<dbReference type="EMBL" id="AL021710">
    <property type="protein sequence ID" value="CAA16728.1"/>
    <property type="molecule type" value="Genomic_DNA"/>
</dbReference>
<dbReference type="EMBL" id="AL161548">
    <property type="protein sequence ID" value="CAB78850.1"/>
    <property type="molecule type" value="Genomic_DNA"/>
</dbReference>
<dbReference type="EMBL" id="CP002687">
    <property type="protein sequence ID" value="AEE84051.1"/>
    <property type="molecule type" value="Genomic_DNA"/>
</dbReference>
<dbReference type="EMBL" id="AY093192">
    <property type="protein sequence ID" value="AAM13191.1"/>
    <property type="molecule type" value="mRNA"/>
</dbReference>
<dbReference type="EMBL" id="BT010129">
    <property type="protein sequence ID" value="AAQ22598.1"/>
    <property type="molecule type" value="mRNA"/>
</dbReference>
<dbReference type="EMBL" id="AK227146">
    <property type="protein sequence ID" value="BAE99191.1"/>
    <property type="molecule type" value="mRNA"/>
</dbReference>
<dbReference type="PIR" id="S12785">
    <property type="entry name" value="S12785"/>
</dbReference>
<dbReference type="RefSeq" id="NP_193583.1">
    <property type="nucleotide sequence ID" value="NM_117962.3"/>
</dbReference>
<dbReference type="SMR" id="P16127"/>
<dbReference type="BioGRID" id="12873">
    <property type="interactions" value="1"/>
</dbReference>
<dbReference type="FunCoup" id="P16127">
    <property type="interactions" value="916"/>
</dbReference>
<dbReference type="IntAct" id="P16127">
    <property type="interactions" value="1"/>
</dbReference>
<dbReference type="STRING" id="3702.P16127"/>
<dbReference type="iPTMnet" id="P16127"/>
<dbReference type="MetOSite" id="P16127"/>
<dbReference type="PaxDb" id="3702-AT4G18480.1"/>
<dbReference type="ProteomicsDB" id="245179"/>
<dbReference type="EnsemblPlants" id="AT4G18480.1">
    <property type="protein sequence ID" value="AT4G18480.1"/>
    <property type="gene ID" value="AT4G18480"/>
</dbReference>
<dbReference type="GeneID" id="827580"/>
<dbReference type="Gramene" id="AT4G18480.1">
    <property type="protein sequence ID" value="AT4G18480.1"/>
    <property type="gene ID" value="AT4G18480"/>
</dbReference>
<dbReference type="KEGG" id="ath:AT4G18480"/>
<dbReference type="Araport" id="AT4G18480"/>
<dbReference type="TAIR" id="AT4G18480">
    <property type="gene designation" value="CHLI1"/>
</dbReference>
<dbReference type="eggNOG" id="ENOG502QRUY">
    <property type="taxonomic scope" value="Eukaryota"/>
</dbReference>
<dbReference type="HOGENOM" id="CLU_016684_0_0_1"/>
<dbReference type="InParanoid" id="P16127"/>
<dbReference type="OMA" id="FRPGKLF"/>
<dbReference type="OrthoDB" id="34999at2759"/>
<dbReference type="PhylomeDB" id="P16127"/>
<dbReference type="BioCyc" id="ARA:AT4G18480-MONOMER"/>
<dbReference type="BioCyc" id="MetaCyc:MONOMER1F-75"/>
<dbReference type="SABIO-RK" id="P16127"/>
<dbReference type="UniPathway" id="UPA00668"/>
<dbReference type="PRO" id="PR:P16127"/>
<dbReference type="Proteomes" id="UP000006548">
    <property type="component" value="Chromosome 4"/>
</dbReference>
<dbReference type="ExpressionAtlas" id="P16127">
    <property type="expression patterns" value="baseline and differential"/>
</dbReference>
<dbReference type="GO" id="GO:0009507">
    <property type="term" value="C:chloroplast"/>
    <property type="evidence" value="ECO:0007005"/>
    <property type="project" value="TAIR"/>
</dbReference>
<dbReference type="GO" id="GO:0009570">
    <property type="term" value="C:chloroplast stroma"/>
    <property type="evidence" value="ECO:0000314"/>
    <property type="project" value="TAIR"/>
</dbReference>
<dbReference type="GO" id="GO:0005829">
    <property type="term" value="C:cytosol"/>
    <property type="evidence" value="ECO:0007005"/>
    <property type="project" value="TAIR"/>
</dbReference>
<dbReference type="GO" id="GO:0010007">
    <property type="term" value="C:magnesium chelatase complex"/>
    <property type="evidence" value="ECO:0000304"/>
    <property type="project" value="TAIR"/>
</dbReference>
<dbReference type="GO" id="GO:0009505">
    <property type="term" value="C:plant-type cell wall"/>
    <property type="evidence" value="ECO:0007005"/>
    <property type="project" value="TAIR"/>
</dbReference>
<dbReference type="GO" id="GO:0005524">
    <property type="term" value="F:ATP binding"/>
    <property type="evidence" value="ECO:0007669"/>
    <property type="project" value="UniProtKB-KW"/>
</dbReference>
<dbReference type="GO" id="GO:0016887">
    <property type="term" value="F:ATP hydrolysis activity"/>
    <property type="evidence" value="ECO:0000314"/>
    <property type="project" value="TAIR"/>
</dbReference>
<dbReference type="GO" id="GO:0016851">
    <property type="term" value="F:magnesium chelatase activity"/>
    <property type="evidence" value="ECO:0000303"/>
    <property type="project" value="TAIR"/>
</dbReference>
<dbReference type="GO" id="GO:0015995">
    <property type="term" value="P:chlorophyll biosynthetic process"/>
    <property type="evidence" value="ECO:0000304"/>
    <property type="project" value="TAIR"/>
</dbReference>
<dbReference type="GO" id="GO:0015979">
    <property type="term" value="P:photosynthesis"/>
    <property type="evidence" value="ECO:0007669"/>
    <property type="project" value="UniProtKB-KW"/>
</dbReference>
<dbReference type="CDD" id="cd00009">
    <property type="entry name" value="AAA"/>
    <property type="match status" value="1"/>
</dbReference>
<dbReference type="FunFam" id="1.10.8.80:FF:000001">
    <property type="entry name" value="Mg-protoporphyrin IX chelatase"/>
    <property type="match status" value="1"/>
</dbReference>
<dbReference type="FunFam" id="3.40.50.300:FF:000601">
    <property type="entry name" value="Mg-protoporphyrin IX chelatase"/>
    <property type="match status" value="1"/>
</dbReference>
<dbReference type="Gene3D" id="1.10.8.80">
    <property type="entry name" value="Magnesium chelatase subunit I, C-Terminal domain"/>
    <property type="match status" value="1"/>
</dbReference>
<dbReference type="Gene3D" id="3.40.50.300">
    <property type="entry name" value="P-loop containing nucleotide triphosphate hydrolases"/>
    <property type="match status" value="1"/>
</dbReference>
<dbReference type="InterPro" id="IPR003593">
    <property type="entry name" value="AAA+_ATPase"/>
</dbReference>
<dbReference type="InterPro" id="IPR045006">
    <property type="entry name" value="CHLI-like"/>
</dbReference>
<dbReference type="InterPro" id="IPR041628">
    <property type="entry name" value="ChlI/MoxR_AAA_lid"/>
</dbReference>
<dbReference type="InterPro" id="IPR011775">
    <property type="entry name" value="Mg_chelatase_ATPase-isu"/>
</dbReference>
<dbReference type="InterPro" id="IPR000523">
    <property type="entry name" value="Mg_chelatse_chII-like_cat_dom"/>
</dbReference>
<dbReference type="InterPro" id="IPR027417">
    <property type="entry name" value="P-loop_NTPase"/>
</dbReference>
<dbReference type="NCBIfam" id="TIGR02030">
    <property type="entry name" value="BchI-ChlI"/>
    <property type="match status" value="1"/>
</dbReference>
<dbReference type="PANTHER" id="PTHR32039">
    <property type="entry name" value="MAGNESIUM-CHELATASE SUBUNIT CHLI"/>
    <property type="match status" value="1"/>
</dbReference>
<dbReference type="PANTHER" id="PTHR32039:SF18">
    <property type="entry name" value="MAGNESIUM-CHELATASE SUBUNIT CHLI-1, CHLOROPLASTIC"/>
    <property type="match status" value="1"/>
</dbReference>
<dbReference type="Pfam" id="PF17863">
    <property type="entry name" value="AAA_lid_2"/>
    <property type="match status" value="1"/>
</dbReference>
<dbReference type="Pfam" id="PF01078">
    <property type="entry name" value="Mg_chelatase"/>
    <property type="match status" value="1"/>
</dbReference>
<dbReference type="SMART" id="SM00382">
    <property type="entry name" value="AAA"/>
    <property type="match status" value="1"/>
</dbReference>
<dbReference type="SUPFAM" id="SSF52540">
    <property type="entry name" value="P-loop containing nucleoside triphosphate hydrolases"/>
    <property type="match status" value="1"/>
</dbReference>
<comment type="function">
    <text evidence="2 3 4 5 8 9">Involved in chlorophyll biosynthesis. Catalyzes the insertion of magnesium ion into protoporphyrin IX to yield Mg-protoporphyrin IX. The magnesium-chelatase is a complex of three subunits, CHLI, CHLD and CHLH. The reaction takes place in two steps, with an ATP-dependent activation followed by an ATP-dependent chelation step. Possesses high affinity for ATP and may play a major role in chlorophyll biosynthesis. Does not bind abscisic acid (ABA), but is a positive regulator of ABA signaling (PubMed:11842180, PubMed:15815918, PubMed:17472958, PubMed:18846282, PubMed:23011401). May be involved in ABA signaling in the control of stomatal aperture, but does not seem to have an effect on ABA-induced gene expression (PubMed:24840863).</text>
</comment>
<comment type="catalytic activity">
    <reaction evidence="11">
        <text>protoporphyrin IX + Mg(2+) + ATP + H2O = Mg-protoporphyrin IX + ADP + phosphate + 3 H(+)</text>
        <dbReference type="Rhea" id="RHEA:13961"/>
        <dbReference type="ChEBI" id="CHEBI:15377"/>
        <dbReference type="ChEBI" id="CHEBI:15378"/>
        <dbReference type="ChEBI" id="CHEBI:18420"/>
        <dbReference type="ChEBI" id="CHEBI:30616"/>
        <dbReference type="ChEBI" id="CHEBI:43474"/>
        <dbReference type="ChEBI" id="CHEBI:57306"/>
        <dbReference type="ChEBI" id="CHEBI:60492"/>
        <dbReference type="ChEBI" id="CHEBI:456216"/>
        <dbReference type="EC" id="6.6.1.1"/>
    </reaction>
    <physiologicalReaction direction="left-to-right" evidence="11">
        <dbReference type="Rhea" id="RHEA:13962"/>
    </physiologicalReaction>
</comment>
<comment type="activity regulation">
    <text evidence="4">Redox regulation; active in reducing conditions, inactive in oxidizing conditions. Thioredoxins f and m mediate the reversible reductive activation of oxidized CHLI1.</text>
</comment>
<comment type="biophysicochemical properties">
    <kinetics>
        <KM evidence="4">460 uM for ATP</KM>
        <Vmax evidence="4">55.0 nmol/min/mg enzyme toward ATP</Vmax>
    </kinetics>
</comment>
<comment type="pathway">
    <text>Porphyrin-containing compound metabolism; chlorophyll biosynthesis.</text>
</comment>
<comment type="subunit">
    <text evidence="8">The magnesium chelatase complex is a heterotrimer consisting of subunits CHLI, CHLD and CHLH. Interacts with CHLH and CHLD.</text>
</comment>
<comment type="subcellular location">
    <subcellularLocation>
        <location evidence="10">Plastid</location>
        <location evidence="10">Chloroplast</location>
    </subcellularLocation>
</comment>
<comment type="induction">
    <text evidence="6">Not regulated by light.</text>
</comment>
<comment type="disruption phenotype">
    <text evidence="2 3 7 9">Homozygous mutants are chlorotic lethal when grown on soil, but can grow on sucrose-containing medium (PubMed:11842180, PubMed:15815918, PubMed:2158442). Dwarf seedlings that exhibit reduced leaf temperature, wide stomatal aperture, and a pale green phenotype (PubMed:24840863).</text>
</comment>
<comment type="similarity">
    <text evidence="10">Belongs to the Mg-chelatase subunits D/I family.</text>
</comment>
<protein>
    <recommendedName>
        <fullName>Magnesium-chelatase subunit ChlI-1, chloroplastic</fullName>
        <shortName>Mg-chelatase subunit I-1</shortName>
        <ecNumber evidence="11">6.6.1.1</ecNumber>
    </recommendedName>
    <alternativeName>
        <fullName>Mg-protoporphyrin IX chelatase subunit ChlI-1</fullName>
    </alternativeName>
    <alternativeName>
        <fullName>Protein CHLORINA 42</fullName>
    </alternativeName>
</protein>
<name>CHLI1_ARATH</name>
<evidence type="ECO:0000255" key="1"/>
<evidence type="ECO:0000269" key="2">
    <source>
    </source>
</evidence>
<evidence type="ECO:0000269" key="3">
    <source>
    </source>
</evidence>
<evidence type="ECO:0000269" key="4">
    <source>
    </source>
</evidence>
<evidence type="ECO:0000269" key="5">
    <source>
    </source>
</evidence>
<evidence type="ECO:0000269" key="6">
    <source>
    </source>
</evidence>
<evidence type="ECO:0000269" key="7">
    <source>
    </source>
</evidence>
<evidence type="ECO:0000269" key="8">
    <source>
    </source>
</evidence>
<evidence type="ECO:0000269" key="9">
    <source>
    </source>
</evidence>
<evidence type="ECO:0000305" key="10"/>
<evidence type="ECO:0000305" key="11">
    <source>
    </source>
</evidence>
<evidence type="ECO:0000305" key="12">
    <source>
    </source>
</evidence>
<evidence type="ECO:0007744" key="13">
    <source>
    </source>
</evidence>
<evidence type="ECO:0007744" key="14">
    <source>
    </source>
</evidence>